<gene>
    <name type="ordered locus">BPUM_0784</name>
</gene>
<accession>A8FB51</accession>
<dbReference type="EC" id="3.-.-.-" evidence="1"/>
<dbReference type="EMBL" id="CP000813">
    <property type="protein sequence ID" value="ABV61468.1"/>
    <property type="molecule type" value="Genomic_DNA"/>
</dbReference>
<dbReference type="RefSeq" id="WP_012009309.1">
    <property type="nucleotide sequence ID" value="NZ_VEIS01000018.1"/>
</dbReference>
<dbReference type="SMR" id="A8FB51"/>
<dbReference type="STRING" id="315750.BPUM_0784"/>
<dbReference type="GeneID" id="5620029"/>
<dbReference type="KEGG" id="bpu:BPUM_0784"/>
<dbReference type="eggNOG" id="COG2318">
    <property type="taxonomic scope" value="Bacteria"/>
</dbReference>
<dbReference type="HOGENOM" id="CLU_105789_1_0_9"/>
<dbReference type="OrthoDB" id="9796039at2"/>
<dbReference type="Proteomes" id="UP000001355">
    <property type="component" value="Chromosome"/>
</dbReference>
<dbReference type="GO" id="GO:0005737">
    <property type="term" value="C:cytoplasm"/>
    <property type="evidence" value="ECO:0007669"/>
    <property type="project" value="UniProtKB-SubCell"/>
</dbReference>
<dbReference type="GO" id="GO:0016787">
    <property type="term" value="F:hydrolase activity"/>
    <property type="evidence" value="ECO:0007669"/>
    <property type="project" value="UniProtKB-UniRule"/>
</dbReference>
<dbReference type="GO" id="GO:0008270">
    <property type="term" value="F:zinc ion binding"/>
    <property type="evidence" value="ECO:0007669"/>
    <property type="project" value="UniProtKB-UniRule"/>
</dbReference>
<dbReference type="Gene3D" id="1.20.120.450">
    <property type="entry name" value="dinb family like domain"/>
    <property type="match status" value="1"/>
</dbReference>
<dbReference type="HAMAP" id="MF_01256">
    <property type="entry name" value="YfiT_hydrol"/>
    <property type="match status" value="1"/>
</dbReference>
<dbReference type="InterPro" id="IPR024775">
    <property type="entry name" value="DinB-like"/>
</dbReference>
<dbReference type="InterPro" id="IPR034660">
    <property type="entry name" value="DinB/YfiT-like"/>
</dbReference>
<dbReference type="InterPro" id="IPR023774">
    <property type="entry name" value="Put_metal_dep_hydrolase_YfiT"/>
</dbReference>
<dbReference type="NCBIfam" id="NF009807">
    <property type="entry name" value="PRK13291.1"/>
    <property type="match status" value="1"/>
</dbReference>
<dbReference type="Pfam" id="PF12867">
    <property type="entry name" value="DinB_2"/>
    <property type="match status" value="1"/>
</dbReference>
<dbReference type="SUPFAM" id="SSF109854">
    <property type="entry name" value="DinB/YfiT-like putative metalloenzymes"/>
    <property type="match status" value="1"/>
</dbReference>
<proteinExistence type="inferred from homology"/>
<organism>
    <name type="scientific">Bacillus pumilus (strain SAFR-032)</name>
    <dbReference type="NCBI Taxonomy" id="315750"/>
    <lineage>
        <taxon>Bacteria</taxon>
        <taxon>Bacillati</taxon>
        <taxon>Bacillota</taxon>
        <taxon>Bacilli</taxon>
        <taxon>Bacillales</taxon>
        <taxon>Bacillaceae</taxon>
        <taxon>Bacillus</taxon>
    </lineage>
</organism>
<comment type="function">
    <text evidence="1">Possible metal-dependent hydrolase.</text>
</comment>
<comment type="cofactor">
    <cofactor evidence="1">
        <name>Zn(2+)</name>
        <dbReference type="ChEBI" id="CHEBI:29105"/>
    </cofactor>
    <text evidence="1">Binds 1 zinc ion per subunit.</text>
</comment>
<comment type="subunit">
    <text evidence="1">Homodimer.</text>
</comment>
<comment type="subcellular location">
    <subcellularLocation>
        <location evidence="1">Cytoplasm</location>
    </subcellularLocation>
</comment>
<comment type="similarity">
    <text evidence="1">Belongs to the metal hydrolase YfiT family.</text>
</comment>
<protein>
    <recommendedName>
        <fullName evidence="1">Putative metal-dependent hydrolase BPUM_0784</fullName>
        <ecNumber evidence="1">3.-.-.-</ecNumber>
    </recommendedName>
</protein>
<reference key="1">
    <citation type="journal article" date="2007" name="PLoS ONE">
        <title>Paradoxical DNA repair and peroxide resistance gene conservation in Bacillus pumilus SAFR-032.</title>
        <authorList>
            <person name="Gioia J."/>
            <person name="Yerrapragada S."/>
            <person name="Qin X."/>
            <person name="Jiang H."/>
            <person name="Igboeli O.C."/>
            <person name="Muzny D."/>
            <person name="Dugan-Rocha S."/>
            <person name="Ding Y."/>
            <person name="Hawes A."/>
            <person name="Liu W."/>
            <person name="Perez L."/>
            <person name="Kovar C."/>
            <person name="Dinh H."/>
            <person name="Lee S."/>
            <person name="Nazareth L."/>
            <person name="Blyth P."/>
            <person name="Holder M."/>
            <person name="Buhay C."/>
            <person name="Tirumalai M.R."/>
            <person name="Liu Y."/>
            <person name="Dasgupta I."/>
            <person name="Bokhetache L."/>
            <person name="Fujita M."/>
            <person name="Karouia F."/>
            <person name="Eswara Moorthy P."/>
            <person name="Siefert J."/>
            <person name="Uzman A."/>
            <person name="Buzumbo P."/>
            <person name="Verma A."/>
            <person name="Zwiya H."/>
            <person name="McWilliams B.D."/>
            <person name="Olowu A."/>
            <person name="Clinkenbeard K.D."/>
            <person name="Newcombe D."/>
            <person name="Golebiewski L."/>
            <person name="Petrosino J.F."/>
            <person name="Nicholson W.L."/>
            <person name="Fox G.E."/>
            <person name="Venkateswaran K."/>
            <person name="Highlander S.K."/>
            <person name="Weinstock G.M."/>
        </authorList>
    </citation>
    <scope>NUCLEOTIDE SEQUENCE [LARGE SCALE GENOMIC DNA]</scope>
    <source>
        <strain>SAFR-032</strain>
    </source>
</reference>
<name>Y784_BACP2</name>
<evidence type="ECO:0000255" key="1">
    <source>
        <dbReference type="HAMAP-Rule" id="MF_01256"/>
    </source>
</evidence>
<keyword id="KW-0963">Cytoplasm</keyword>
<keyword id="KW-0378">Hydrolase</keyword>
<keyword id="KW-0479">Metal-binding</keyword>
<keyword id="KW-0862">Zinc</keyword>
<feature type="chain" id="PRO_1000067243" description="Putative metal-dependent hydrolase BPUM_0784">
    <location>
        <begin position="1"/>
        <end position="175"/>
    </location>
</feature>
<feature type="binding site" evidence="1">
    <location>
        <position position="65"/>
    </location>
    <ligand>
        <name>Zn(2+)</name>
        <dbReference type="ChEBI" id="CHEBI:29105"/>
    </ligand>
</feature>
<feature type="binding site" evidence="1">
    <location>
        <position position="157"/>
    </location>
    <ligand>
        <name>Zn(2+)</name>
        <dbReference type="ChEBI" id="CHEBI:29105"/>
    </ligand>
</feature>
<feature type="binding site" evidence="1">
    <location>
        <position position="161"/>
    </location>
    <ligand>
        <name>Zn(2+)</name>
        <dbReference type="ChEBI" id="CHEBI:29105"/>
    </ligand>
</feature>
<sequence>MTSLQYPIGLYGPVENKTKEQLEAWIDQLAEIPQQYEAVTNQLTDAQLDTPYRTGGWTVRQLIHHVADSHLNAYLRFKLALTEETPHIRPYDQAGFAELPDSKAPISLSLPFISSLHRRWVTLLRGMTAEDFTASYYHPADQQTVSLYDATGMYVWHSTHHLAHITELIKRNQWN</sequence>